<proteinExistence type="inferred from homology"/>
<gene>
    <name evidence="1" type="primary">nuoK</name>
    <name type="ordered locus">BU163</name>
</gene>
<comment type="function">
    <text evidence="1">NDH-1 shuttles electrons from NADH, via FMN and iron-sulfur (Fe-S) centers, to quinones in the respiratory chain. The immediate electron acceptor for the enzyme in this species is believed to be ubiquinone. Couples the redox reaction to proton translocation (for every two electrons transferred, four hydrogen ions are translocated across the cytoplasmic membrane), and thus conserves the redox energy in a proton gradient.</text>
</comment>
<comment type="catalytic activity">
    <reaction evidence="1">
        <text>a quinone + NADH + 5 H(+)(in) = a quinol + NAD(+) + 4 H(+)(out)</text>
        <dbReference type="Rhea" id="RHEA:57888"/>
        <dbReference type="ChEBI" id="CHEBI:15378"/>
        <dbReference type="ChEBI" id="CHEBI:24646"/>
        <dbReference type="ChEBI" id="CHEBI:57540"/>
        <dbReference type="ChEBI" id="CHEBI:57945"/>
        <dbReference type="ChEBI" id="CHEBI:132124"/>
    </reaction>
</comment>
<comment type="subunit">
    <text evidence="1">NDH-1 is composed of 13 different subunits. Subunits NuoA, H, J, K, L, M, N constitute the membrane sector of the complex.</text>
</comment>
<comment type="subcellular location">
    <subcellularLocation>
        <location evidence="1">Cell membrane</location>
        <topology evidence="1">Multi-pass membrane protein</topology>
    </subcellularLocation>
</comment>
<comment type="similarity">
    <text evidence="1">Belongs to the complex I subunit 4L family.</text>
</comment>
<organism>
    <name type="scientific">Buchnera aphidicola subsp. Acyrthosiphon pisum (strain APS)</name>
    <name type="common">Acyrthosiphon pisum symbiotic bacterium</name>
    <dbReference type="NCBI Taxonomy" id="107806"/>
    <lineage>
        <taxon>Bacteria</taxon>
        <taxon>Pseudomonadati</taxon>
        <taxon>Pseudomonadota</taxon>
        <taxon>Gammaproteobacteria</taxon>
        <taxon>Enterobacterales</taxon>
        <taxon>Erwiniaceae</taxon>
        <taxon>Buchnera</taxon>
    </lineage>
</organism>
<sequence length="100" mass="11180">MISLFHGLFLSLILFILGLTSLIVRRNILFILISLEIMMNAVGLALIVVGSYWHQADGQIMYIFVITLAASEASIALALLLQLYRRKKTLNIDILSEMNG</sequence>
<reference key="1">
    <citation type="journal article" date="2000" name="Nature">
        <title>Genome sequence of the endocellular bacterial symbiont of aphids Buchnera sp. APS.</title>
        <authorList>
            <person name="Shigenobu S."/>
            <person name="Watanabe H."/>
            <person name="Hattori M."/>
            <person name="Sakaki Y."/>
            <person name="Ishikawa H."/>
        </authorList>
    </citation>
    <scope>NUCLEOTIDE SEQUENCE [LARGE SCALE GENOMIC DNA]</scope>
    <source>
        <strain>APS</strain>
    </source>
</reference>
<name>NUOK_BUCAI</name>
<protein>
    <recommendedName>
        <fullName evidence="1">NADH-quinone oxidoreductase subunit K</fullName>
        <ecNumber evidence="1">7.1.1.-</ecNumber>
    </recommendedName>
    <alternativeName>
        <fullName evidence="1">NADH dehydrogenase I subunit K</fullName>
    </alternativeName>
    <alternativeName>
        <fullName evidence="1">NDH-1 subunit K</fullName>
    </alternativeName>
</protein>
<keyword id="KW-1003">Cell membrane</keyword>
<keyword id="KW-0472">Membrane</keyword>
<keyword id="KW-0520">NAD</keyword>
<keyword id="KW-0874">Quinone</keyword>
<keyword id="KW-1185">Reference proteome</keyword>
<keyword id="KW-1278">Translocase</keyword>
<keyword id="KW-0812">Transmembrane</keyword>
<keyword id="KW-1133">Transmembrane helix</keyword>
<keyword id="KW-0813">Transport</keyword>
<keyword id="KW-0830">Ubiquinone</keyword>
<feature type="chain" id="PRO_0000118528" description="NADH-quinone oxidoreductase subunit K">
    <location>
        <begin position="1"/>
        <end position="100"/>
    </location>
</feature>
<feature type="transmembrane region" description="Helical" evidence="1">
    <location>
        <begin position="4"/>
        <end position="24"/>
    </location>
</feature>
<feature type="transmembrane region" description="Helical" evidence="1">
    <location>
        <begin position="28"/>
        <end position="48"/>
    </location>
</feature>
<feature type="transmembrane region" description="Helical" evidence="1">
    <location>
        <begin position="60"/>
        <end position="80"/>
    </location>
</feature>
<evidence type="ECO:0000255" key="1">
    <source>
        <dbReference type="HAMAP-Rule" id="MF_01456"/>
    </source>
</evidence>
<accession>P57261</accession>
<dbReference type="EC" id="7.1.1.-" evidence="1"/>
<dbReference type="EMBL" id="BA000003">
    <property type="protein sequence ID" value="BAB12881.1"/>
    <property type="molecule type" value="Genomic_DNA"/>
</dbReference>
<dbReference type="RefSeq" id="NP_239995.1">
    <property type="nucleotide sequence ID" value="NC_002528.1"/>
</dbReference>
<dbReference type="RefSeq" id="WP_009874119.1">
    <property type="nucleotide sequence ID" value="NZ_AP036055.1"/>
</dbReference>
<dbReference type="SMR" id="P57261"/>
<dbReference type="STRING" id="563178.BUAP5A_161"/>
<dbReference type="EnsemblBacteria" id="BAB12881">
    <property type="protein sequence ID" value="BAB12881"/>
    <property type="gene ID" value="BAB12881"/>
</dbReference>
<dbReference type="KEGG" id="buc:BU163"/>
<dbReference type="PATRIC" id="fig|107806.10.peg.173"/>
<dbReference type="eggNOG" id="COG0713">
    <property type="taxonomic scope" value="Bacteria"/>
</dbReference>
<dbReference type="HOGENOM" id="CLU_144724_0_1_6"/>
<dbReference type="Proteomes" id="UP000001806">
    <property type="component" value="Chromosome"/>
</dbReference>
<dbReference type="GO" id="GO:0030964">
    <property type="term" value="C:NADH dehydrogenase complex"/>
    <property type="evidence" value="ECO:0007669"/>
    <property type="project" value="TreeGrafter"/>
</dbReference>
<dbReference type="GO" id="GO:0005886">
    <property type="term" value="C:plasma membrane"/>
    <property type="evidence" value="ECO:0007669"/>
    <property type="project" value="UniProtKB-SubCell"/>
</dbReference>
<dbReference type="GO" id="GO:0050136">
    <property type="term" value="F:NADH:ubiquinone reductase (non-electrogenic) activity"/>
    <property type="evidence" value="ECO:0007669"/>
    <property type="project" value="UniProtKB-UniRule"/>
</dbReference>
<dbReference type="GO" id="GO:0048038">
    <property type="term" value="F:quinone binding"/>
    <property type="evidence" value="ECO:0007669"/>
    <property type="project" value="UniProtKB-KW"/>
</dbReference>
<dbReference type="GO" id="GO:0042773">
    <property type="term" value="P:ATP synthesis coupled electron transport"/>
    <property type="evidence" value="ECO:0007669"/>
    <property type="project" value="InterPro"/>
</dbReference>
<dbReference type="FunFam" id="1.10.287.3510:FF:000001">
    <property type="entry name" value="NADH-quinone oxidoreductase subunit K"/>
    <property type="match status" value="1"/>
</dbReference>
<dbReference type="Gene3D" id="1.10.287.3510">
    <property type="match status" value="1"/>
</dbReference>
<dbReference type="HAMAP" id="MF_01456">
    <property type="entry name" value="NDH1_NuoK"/>
    <property type="match status" value="1"/>
</dbReference>
<dbReference type="InterPro" id="IPR001133">
    <property type="entry name" value="NADH_UbQ_OxRdtase_chain4L/K"/>
</dbReference>
<dbReference type="InterPro" id="IPR039428">
    <property type="entry name" value="NUOK/Mnh_C1-like"/>
</dbReference>
<dbReference type="NCBIfam" id="NF004319">
    <property type="entry name" value="PRK05715.1-1"/>
    <property type="match status" value="1"/>
</dbReference>
<dbReference type="NCBIfam" id="NF004320">
    <property type="entry name" value="PRK05715.1-2"/>
    <property type="match status" value="1"/>
</dbReference>
<dbReference type="PANTHER" id="PTHR11434:SF16">
    <property type="entry name" value="NADH-UBIQUINONE OXIDOREDUCTASE CHAIN 4L"/>
    <property type="match status" value="1"/>
</dbReference>
<dbReference type="PANTHER" id="PTHR11434">
    <property type="entry name" value="NADH-UBIQUINONE OXIDOREDUCTASE SUBUNIT ND4L"/>
    <property type="match status" value="1"/>
</dbReference>
<dbReference type="Pfam" id="PF00420">
    <property type="entry name" value="Oxidored_q2"/>
    <property type="match status" value="1"/>
</dbReference>